<dbReference type="EMBL" id="X61084">
    <property type="protein sequence ID" value="CAA43398.1"/>
    <property type="molecule type" value="Genomic_DNA"/>
</dbReference>
<dbReference type="PIR" id="S23398">
    <property type="entry name" value="S23398"/>
</dbReference>
<dbReference type="RefSeq" id="NP_001231336.1">
    <property type="nucleotide sequence ID" value="NM_001244407.1"/>
</dbReference>
<dbReference type="SMR" id="P28681"/>
<dbReference type="GlyCosmos" id="P28681">
    <property type="glycosylation" value="2 sites, No reported glycans"/>
</dbReference>
<dbReference type="PaxDb" id="10029-NP_001231336.1"/>
<dbReference type="GeneID" id="100689279"/>
<dbReference type="KEGG" id="cge:100689279"/>
<dbReference type="CTD" id="6010"/>
<dbReference type="eggNOG" id="KOG3656">
    <property type="taxonomic scope" value="Eukaryota"/>
</dbReference>
<dbReference type="OrthoDB" id="5962323at2759"/>
<dbReference type="Proteomes" id="UP000694386">
    <property type="component" value="Unplaced"/>
</dbReference>
<dbReference type="Proteomes" id="UP001108280">
    <property type="component" value="Chromosome 8"/>
</dbReference>
<dbReference type="GO" id="GO:0016020">
    <property type="term" value="C:membrane"/>
    <property type="evidence" value="ECO:0000250"/>
    <property type="project" value="UniProtKB"/>
</dbReference>
<dbReference type="GO" id="GO:0097381">
    <property type="term" value="C:photoreceptor disc membrane"/>
    <property type="evidence" value="ECO:0000250"/>
    <property type="project" value="UniProtKB"/>
</dbReference>
<dbReference type="GO" id="GO:0060342">
    <property type="term" value="C:photoreceptor inner segment membrane"/>
    <property type="evidence" value="ECO:0000250"/>
    <property type="project" value="UniProtKB"/>
</dbReference>
<dbReference type="GO" id="GO:0042622">
    <property type="term" value="C:photoreceptor outer segment membrane"/>
    <property type="evidence" value="ECO:0000250"/>
    <property type="project" value="UniProtKB"/>
</dbReference>
<dbReference type="GO" id="GO:0005886">
    <property type="term" value="C:plasma membrane"/>
    <property type="evidence" value="ECO:0000250"/>
    <property type="project" value="UniProtKB"/>
</dbReference>
<dbReference type="GO" id="GO:0005502">
    <property type="term" value="F:11-cis retinal binding"/>
    <property type="evidence" value="ECO:0000250"/>
    <property type="project" value="UniProtKB"/>
</dbReference>
<dbReference type="GO" id="GO:0008020">
    <property type="term" value="F:G protein-coupled photoreceptor activity"/>
    <property type="evidence" value="ECO:0000250"/>
    <property type="project" value="UniProtKB"/>
</dbReference>
<dbReference type="GO" id="GO:0046872">
    <property type="term" value="F:metal ion binding"/>
    <property type="evidence" value="ECO:0007669"/>
    <property type="project" value="UniProtKB-KW"/>
</dbReference>
<dbReference type="GO" id="GO:0016038">
    <property type="term" value="P:absorption of visible light"/>
    <property type="evidence" value="ECO:0000250"/>
    <property type="project" value="AgBase"/>
</dbReference>
<dbReference type="GO" id="GO:0016056">
    <property type="term" value="P:G protein-coupled opsin signaling pathway"/>
    <property type="evidence" value="ECO:0000250"/>
    <property type="project" value="UniProtKB"/>
</dbReference>
<dbReference type="GO" id="GO:0007601">
    <property type="term" value="P:visual perception"/>
    <property type="evidence" value="ECO:0007669"/>
    <property type="project" value="UniProtKB-KW"/>
</dbReference>
<dbReference type="CDD" id="cd15080">
    <property type="entry name" value="7tmA_MWS_opsin"/>
    <property type="match status" value="1"/>
</dbReference>
<dbReference type="FunFam" id="1.20.1070.10:FF:000018">
    <property type="entry name" value="Rhodopsin"/>
    <property type="match status" value="1"/>
</dbReference>
<dbReference type="Gene3D" id="1.20.1070.10">
    <property type="entry name" value="Rhodopsin 7-helix transmembrane proteins"/>
    <property type="match status" value="1"/>
</dbReference>
<dbReference type="InterPro" id="IPR050125">
    <property type="entry name" value="GPCR_opsins"/>
</dbReference>
<dbReference type="InterPro" id="IPR000276">
    <property type="entry name" value="GPCR_Rhodpsn"/>
</dbReference>
<dbReference type="InterPro" id="IPR017452">
    <property type="entry name" value="GPCR_Rhodpsn_7TM"/>
</dbReference>
<dbReference type="InterPro" id="IPR001760">
    <property type="entry name" value="Opsin"/>
</dbReference>
<dbReference type="InterPro" id="IPR027430">
    <property type="entry name" value="Retinal_BS"/>
</dbReference>
<dbReference type="InterPro" id="IPR000732">
    <property type="entry name" value="Rhodopsin"/>
</dbReference>
<dbReference type="InterPro" id="IPR019477">
    <property type="entry name" value="Rhodopsin_N"/>
</dbReference>
<dbReference type="PANTHER" id="PTHR24240">
    <property type="entry name" value="OPSIN"/>
    <property type="match status" value="1"/>
</dbReference>
<dbReference type="Pfam" id="PF00001">
    <property type="entry name" value="7tm_1"/>
    <property type="match status" value="1"/>
</dbReference>
<dbReference type="Pfam" id="PF10413">
    <property type="entry name" value="Rhodopsin_N"/>
    <property type="match status" value="1"/>
</dbReference>
<dbReference type="PRINTS" id="PR00237">
    <property type="entry name" value="GPCRRHODOPSN"/>
</dbReference>
<dbReference type="PRINTS" id="PR00238">
    <property type="entry name" value="OPSIN"/>
</dbReference>
<dbReference type="PRINTS" id="PR00579">
    <property type="entry name" value="RHODOPSIN"/>
</dbReference>
<dbReference type="SMART" id="SM01381">
    <property type="entry name" value="7TM_GPCR_Srsx"/>
    <property type="match status" value="1"/>
</dbReference>
<dbReference type="SUPFAM" id="SSF81321">
    <property type="entry name" value="Family A G protein-coupled receptor-like"/>
    <property type="match status" value="1"/>
</dbReference>
<dbReference type="PROSITE" id="PS00237">
    <property type="entry name" value="G_PROTEIN_RECEP_F1_1"/>
    <property type="match status" value="1"/>
</dbReference>
<dbReference type="PROSITE" id="PS50262">
    <property type="entry name" value="G_PROTEIN_RECEP_F1_2"/>
    <property type="match status" value="1"/>
</dbReference>
<dbReference type="PROSITE" id="PS00238">
    <property type="entry name" value="OPSIN"/>
    <property type="match status" value="1"/>
</dbReference>
<name>OPSD_CRIGR</name>
<gene>
    <name type="primary">RHO</name>
</gene>
<proteinExistence type="inferred from homology"/>
<feature type="chain" id="PRO_0000197667" description="Rhodopsin">
    <location>
        <begin position="1"/>
        <end position="348"/>
    </location>
</feature>
<feature type="topological domain" description="Extracellular" evidence="6">
    <location>
        <begin position="1"/>
        <end position="36"/>
    </location>
</feature>
<feature type="transmembrane region" description="Helical; Name=1" evidence="1">
    <location>
        <begin position="37"/>
        <end position="61"/>
    </location>
</feature>
<feature type="topological domain" description="Cytoplasmic" evidence="6">
    <location>
        <begin position="62"/>
        <end position="73"/>
    </location>
</feature>
<feature type="transmembrane region" description="Helical; Name=2" evidence="1">
    <location>
        <begin position="74"/>
        <end position="96"/>
    </location>
</feature>
<feature type="topological domain" description="Extracellular" evidence="6">
    <location>
        <begin position="97"/>
        <end position="110"/>
    </location>
</feature>
<feature type="transmembrane region" description="Helical; Name=3" evidence="1">
    <location>
        <begin position="111"/>
        <end position="133"/>
    </location>
</feature>
<feature type="topological domain" description="Cytoplasmic" evidence="6">
    <location>
        <begin position="134"/>
        <end position="152"/>
    </location>
</feature>
<feature type="transmembrane region" description="Helical; Name=4" evidence="1">
    <location>
        <begin position="153"/>
        <end position="173"/>
    </location>
</feature>
<feature type="topological domain" description="Extracellular" evidence="6">
    <location>
        <begin position="174"/>
        <end position="202"/>
    </location>
</feature>
<feature type="transmembrane region" description="Helical; Name=5" evidence="1">
    <location>
        <begin position="203"/>
        <end position="224"/>
    </location>
</feature>
<feature type="topological domain" description="Cytoplasmic" evidence="6">
    <location>
        <begin position="225"/>
        <end position="252"/>
    </location>
</feature>
<feature type="transmembrane region" description="Helical; Name=6" evidence="1">
    <location>
        <begin position="253"/>
        <end position="274"/>
    </location>
</feature>
<feature type="topological domain" description="Extracellular" evidence="6">
    <location>
        <begin position="275"/>
        <end position="286"/>
    </location>
</feature>
<feature type="transmembrane region" description="Helical; Name=7" evidence="1">
    <location>
        <begin position="287"/>
        <end position="308"/>
    </location>
</feature>
<feature type="topological domain" description="Cytoplasmic" evidence="6">
    <location>
        <begin position="309"/>
        <end position="348"/>
    </location>
</feature>
<feature type="region of interest" description="Interaction with SAG" evidence="1">
    <location>
        <begin position="330"/>
        <end position="348"/>
    </location>
</feature>
<feature type="short sequence motif" description="'Ionic lock' involved in activated form stabilization" evidence="1">
    <location>
        <begin position="134"/>
        <end position="136"/>
    </location>
</feature>
<feature type="binding site" evidence="1">
    <location>
        <position position="201"/>
    </location>
    <ligand>
        <name>Zn(2+)</name>
        <dbReference type="ChEBI" id="CHEBI:29105"/>
    </ligand>
</feature>
<feature type="binding site" evidence="1">
    <location>
        <position position="279"/>
    </location>
    <ligand>
        <name>Zn(2+)</name>
        <dbReference type="ChEBI" id="CHEBI:29105"/>
    </ligand>
</feature>
<feature type="site" description="Plays an important role in the conformation switch to the active conformation" evidence="1">
    <location>
        <position position="113"/>
    </location>
</feature>
<feature type="modified residue" description="N-acetylmethionine" evidence="1">
    <location>
        <position position="1"/>
    </location>
</feature>
<feature type="modified residue" description="N6-(retinylidene)lysine" evidence="1">
    <location>
        <position position="296"/>
    </location>
</feature>
<feature type="modified residue" description="Phosphoserine" evidence="2">
    <location>
        <position position="334"/>
    </location>
</feature>
<feature type="modified residue" description="Phosphothreonine" evidence="2">
    <location>
        <position position="336"/>
    </location>
</feature>
<feature type="modified residue" description="Phosphoserine" evidence="2">
    <location>
        <position position="338"/>
    </location>
</feature>
<feature type="modified residue" description="Phosphothreonine" evidence="1">
    <location>
        <position position="340"/>
    </location>
</feature>
<feature type="modified residue" description="Phosphothreonine" evidence="1">
    <location>
        <position position="342"/>
    </location>
</feature>
<feature type="modified residue" description="Phosphoserine" evidence="1">
    <location>
        <position position="343"/>
    </location>
</feature>
<feature type="lipid moiety-binding region" description="S-palmitoyl cysteine" evidence="1">
    <location>
        <position position="322"/>
    </location>
</feature>
<feature type="lipid moiety-binding region" description="S-palmitoyl cysteine" evidence="1">
    <location>
        <position position="323"/>
    </location>
</feature>
<feature type="glycosylation site" description="N-linked (GlcNAc...) asparagine" evidence="4">
    <location>
        <position position="2"/>
    </location>
</feature>
<feature type="glycosylation site" description="N-linked (GlcNAc...) asparagine" evidence="4">
    <location>
        <position position="15"/>
    </location>
</feature>
<feature type="disulfide bond" evidence="5">
    <location>
        <begin position="110"/>
        <end position="187"/>
    </location>
</feature>
<sequence>MNGTEGPNFYVPFSNATGVVRSPFEYPQYYLAEPWQFSMLAAYMFLLIVLGFPINFLTLYVTVQHKKLRTPLNYILLNLAVADLFMVFGGFTTTLYTSLHGYFVFGPTGCNLEGFFATLGGEIALWSLVVLAIERYVVICKPMSNFRFGENHAIMGVVFTWIMALACAAPPLVGWSRYIPEGMQCSCGVDYYTLKPEVNNESFVIYMFVVHFTIPLIVIFFCYGQLVFTVKEAAAQQQESATTQKAEKEVTRMVILMVVFFLICWFPYAGVAFYIFTHQGSNFGPIFMTLPAFFAKSSSIYNPVIYIMMNKQFRNCMLTTLCCGKNILGDDEASATASKTETSQVAPA</sequence>
<comment type="function">
    <text evidence="1 3">Photoreceptor required for image-forming vision at low light intensity. Required for photoreceptor cell viability after birth (By similarity). Light-induced isomerization of 11-cis to all-trans retinal triggers a conformational change that activates signaling via G-proteins. Subsequent receptor phosphorylation mediates displacement of the bound G-protein alpha subunit by the arrestin SAG and terminates signaling (By similarity).</text>
</comment>
<comment type="subunit">
    <text evidence="1 3">Homodimer (By similarity). May form a complex composed of RHO, GRK1 and RCVRN in a Ca(2+)-dependent manner; RCVRN prevents the interaction between GRK1 and RHO (By similarity). Interacts with GRK1 (By similarity). Interacts (phosphorylated form) with SAG. Interacts with GNAT1. Interacts with GNAT3. SAG and G-proteins compete for a common binding site (By similarity). Interacts with PRCD; the interaction promotes PRCD stability. Forms a complex with ASAP1 and ARF4. Forms a complex with ASAP1, RAB11A, Rabin8/RAB3IP, ARF4 and RAB11FIP3; the complex regulates Golgi-to-cilia rhodopsin/RHO transport in photoreceptors (By similarity).</text>
</comment>
<comment type="subcellular location">
    <subcellularLocation>
        <location evidence="1">Membrane</location>
        <topology evidence="1">Multi-pass membrane protein</topology>
    </subcellularLocation>
    <subcellularLocation>
        <location evidence="1">Cell projection</location>
        <location evidence="1">Cilium</location>
        <location evidence="1">Photoreceptor outer segment</location>
    </subcellularLocation>
    <text evidence="3">Synthesized in the inner segment (IS) of rod photoreceptor cells before vectorial transport to disk membranes in the rod outer segment (OS) photosensory cilia.</text>
</comment>
<comment type="PTM">
    <text evidence="1">Phosphorylated on some or all of the serine and threonine residues present in the C-terminal region.</text>
</comment>
<comment type="PTM">
    <text evidence="1">Contains one covalently linked retinal chromophore. Upon light absorption, the covalently bound 11-cis-retinal is converted to all-trans-retinal. After hydrolysis of the Schiff base and release of the covalently bound all-trans-retinal, active rhodopsin is regenerated by binding of a fresh molecule of 11-cis-retinal.</text>
</comment>
<comment type="similarity">
    <text evidence="5">Belongs to the G-protein coupled receptor 1 family. Opsin subfamily.</text>
</comment>
<organism>
    <name type="scientific">Cricetulus griseus</name>
    <name type="common">Chinese hamster</name>
    <name type="synonym">Cricetulus barabensis griseus</name>
    <dbReference type="NCBI Taxonomy" id="10029"/>
    <lineage>
        <taxon>Eukaryota</taxon>
        <taxon>Metazoa</taxon>
        <taxon>Chordata</taxon>
        <taxon>Craniata</taxon>
        <taxon>Vertebrata</taxon>
        <taxon>Euteleostomi</taxon>
        <taxon>Mammalia</taxon>
        <taxon>Eutheria</taxon>
        <taxon>Euarchontoglires</taxon>
        <taxon>Glires</taxon>
        <taxon>Rodentia</taxon>
        <taxon>Myomorpha</taxon>
        <taxon>Muroidea</taxon>
        <taxon>Cricetidae</taxon>
        <taxon>Cricetinae</taxon>
        <taxon>Cricetulus</taxon>
    </lineage>
</organism>
<reference key="1">
    <citation type="journal article" date="1992" name="J. Mol. Biol.">
        <title>Localization and DNA sequence of a replication origin in the rhodopsin gene locus of Chinese hamster cells.</title>
        <authorList>
            <person name="Gale J.M."/>
            <person name="Tobey R.A."/>
            <person name="D'Anna A."/>
        </authorList>
    </citation>
    <scope>NUCLEOTIDE SEQUENCE [GENOMIC DNA]</scope>
    <source>
        <tissue>Ovary</tissue>
    </source>
</reference>
<protein>
    <recommendedName>
        <fullName>Rhodopsin</fullName>
    </recommendedName>
</protein>
<keyword id="KW-0007">Acetylation</keyword>
<keyword id="KW-0966">Cell projection</keyword>
<keyword id="KW-0157">Chromophore</keyword>
<keyword id="KW-1015">Disulfide bond</keyword>
<keyword id="KW-0297">G-protein coupled receptor</keyword>
<keyword id="KW-0325">Glycoprotein</keyword>
<keyword id="KW-0449">Lipoprotein</keyword>
<keyword id="KW-0472">Membrane</keyword>
<keyword id="KW-0479">Metal-binding</keyword>
<keyword id="KW-0564">Palmitate</keyword>
<keyword id="KW-0597">Phosphoprotein</keyword>
<keyword id="KW-0600">Photoreceptor protein</keyword>
<keyword id="KW-0675">Receptor</keyword>
<keyword id="KW-0681">Retinal protein</keyword>
<keyword id="KW-0716">Sensory transduction</keyword>
<keyword id="KW-0807">Transducer</keyword>
<keyword id="KW-0812">Transmembrane</keyword>
<keyword id="KW-1133">Transmembrane helix</keyword>
<keyword id="KW-0844">Vision</keyword>
<keyword id="KW-0862">Zinc</keyword>
<evidence type="ECO:0000250" key="1">
    <source>
        <dbReference type="UniProtKB" id="P02699"/>
    </source>
</evidence>
<evidence type="ECO:0000250" key="2">
    <source>
        <dbReference type="UniProtKB" id="P02700"/>
    </source>
</evidence>
<evidence type="ECO:0000250" key="3">
    <source>
        <dbReference type="UniProtKB" id="P08100"/>
    </source>
</evidence>
<evidence type="ECO:0000255" key="4"/>
<evidence type="ECO:0000255" key="5">
    <source>
        <dbReference type="PROSITE-ProRule" id="PRU00521"/>
    </source>
</evidence>
<evidence type="ECO:0000305" key="6"/>
<accession>P28681</accession>